<sequence length="228" mass="26379">MAQSNQHVSIYNPKVIVYSIGLTTAILASMSIYRSHFVRFSTSLDVPKTLFRTKHLHGKVTSVGDGDNFHFYHLPGGIFAGWGWIRETPEINKFRKLKNKTIHVRLCGVDAPERSHFGKPSQPYSEEALQWLRQFILGKKVKVKPLSVDQYNRIVGRVFIFRWNGWNDVSEEMLRNGVAIVYENKSSAEFDGMKERYLKVENKAKKKKKGLWGIERGLTPGEYKRLYK</sequence>
<reference key="1">
    <citation type="journal article" date="2009" name="Nat. Biotechnol.">
        <title>Genome sequence of the recombinant protein production host Pichia pastoris.</title>
        <authorList>
            <person name="De Schutter K."/>
            <person name="Lin Y.-C."/>
            <person name="Tiels P."/>
            <person name="Van Hecke A."/>
            <person name="Glinka S."/>
            <person name="Weber-Lehmann J."/>
            <person name="Rouze P."/>
            <person name="Van de Peer Y."/>
            <person name="Callewaert N."/>
        </authorList>
    </citation>
    <scope>NUCLEOTIDE SEQUENCE [LARGE SCALE GENOMIC DNA]</scope>
    <source>
        <strain>GS115 / ATCC 20864</strain>
    </source>
</reference>
<proteinExistence type="inferred from homology"/>
<name>LCL3_KOMPG</name>
<feature type="chain" id="PRO_0000408677" description="Probable endonuclease LCL3">
    <location>
        <begin position="1"/>
        <end position="228"/>
    </location>
</feature>
<feature type="transmembrane region" description="Helical" evidence="2">
    <location>
        <begin position="15"/>
        <end position="37"/>
    </location>
</feature>
<feature type="domain" description="TNase-like" evidence="3">
    <location>
        <begin position="54"/>
        <end position="214"/>
    </location>
</feature>
<feature type="active site" evidence="3">
    <location>
        <position position="105"/>
    </location>
</feature>
<feature type="active site" evidence="3">
    <location>
        <position position="113"/>
    </location>
</feature>
<feature type="active site" evidence="3">
    <location>
        <position position="153"/>
    </location>
</feature>
<feature type="binding site" evidence="3">
    <location>
        <position position="110"/>
    </location>
    <ligand>
        <name>Ca(2+)</name>
        <dbReference type="ChEBI" id="CHEBI:29108"/>
    </ligand>
</feature>
<dbReference type="EC" id="3.1.-.-"/>
<dbReference type="EMBL" id="FN392319">
    <property type="protein sequence ID" value="CAY67427.1"/>
    <property type="molecule type" value="Genomic_DNA"/>
</dbReference>
<dbReference type="RefSeq" id="XP_002489708.1">
    <property type="nucleotide sequence ID" value="XM_002489663.1"/>
</dbReference>
<dbReference type="SMR" id="C4QW04"/>
<dbReference type="FunCoup" id="C4QW04">
    <property type="interactions" value="15"/>
</dbReference>
<dbReference type="STRING" id="644223.C4QW04"/>
<dbReference type="EnsemblFungi" id="CAY67427">
    <property type="protein sequence ID" value="CAY67427"/>
    <property type="gene ID" value="PAS_chr1-1_0068"/>
</dbReference>
<dbReference type="GeneID" id="8197196"/>
<dbReference type="KEGG" id="ppa:PAS_chr1-1_0068"/>
<dbReference type="eggNOG" id="ENOG502S1U4">
    <property type="taxonomic scope" value="Eukaryota"/>
</dbReference>
<dbReference type="HOGENOM" id="CLU_046484_0_1_1"/>
<dbReference type="InParanoid" id="C4QW04"/>
<dbReference type="OMA" id="IYHTPGG"/>
<dbReference type="OrthoDB" id="430293at2759"/>
<dbReference type="Proteomes" id="UP000000314">
    <property type="component" value="Chromosome 1"/>
</dbReference>
<dbReference type="GO" id="GO:0016020">
    <property type="term" value="C:membrane"/>
    <property type="evidence" value="ECO:0007669"/>
    <property type="project" value="UniProtKB-SubCell"/>
</dbReference>
<dbReference type="GO" id="GO:0005739">
    <property type="term" value="C:mitochondrion"/>
    <property type="evidence" value="ECO:0007669"/>
    <property type="project" value="UniProtKB-SubCell"/>
</dbReference>
<dbReference type="GO" id="GO:0004519">
    <property type="term" value="F:endonuclease activity"/>
    <property type="evidence" value="ECO:0007669"/>
    <property type="project" value="UniProtKB-KW"/>
</dbReference>
<dbReference type="GO" id="GO:0046872">
    <property type="term" value="F:metal ion binding"/>
    <property type="evidence" value="ECO:0007669"/>
    <property type="project" value="UniProtKB-KW"/>
</dbReference>
<dbReference type="FunFam" id="2.40.50.90:FF:000035">
    <property type="entry name" value="Probable endonuclease LCL3"/>
    <property type="match status" value="1"/>
</dbReference>
<dbReference type="Gene3D" id="2.40.50.90">
    <property type="match status" value="1"/>
</dbReference>
<dbReference type="InterPro" id="IPR035437">
    <property type="entry name" value="SNase_OB-fold_sf"/>
</dbReference>
<dbReference type="InterPro" id="IPR016071">
    <property type="entry name" value="Staphylococal_nuclease_OB-fold"/>
</dbReference>
<dbReference type="PANTHER" id="PTHR12302">
    <property type="entry name" value="EBNA2 BINDING PROTEIN P100"/>
    <property type="match status" value="1"/>
</dbReference>
<dbReference type="PANTHER" id="PTHR12302:SF3">
    <property type="entry name" value="SERINE_THREONINE-PROTEIN KINASE 31"/>
    <property type="match status" value="1"/>
</dbReference>
<dbReference type="Pfam" id="PF00565">
    <property type="entry name" value="SNase"/>
    <property type="match status" value="1"/>
</dbReference>
<dbReference type="SMART" id="SM00318">
    <property type="entry name" value="SNc"/>
    <property type="match status" value="1"/>
</dbReference>
<dbReference type="SUPFAM" id="SSF50199">
    <property type="entry name" value="Staphylococcal nuclease"/>
    <property type="match status" value="1"/>
</dbReference>
<dbReference type="PROSITE" id="PS50830">
    <property type="entry name" value="TNASE_3"/>
    <property type="match status" value="1"/>
</dbReference>
<evidence type="ECO:0000250" key="1"/>
<evidence type="ECO:0000255" key="2"/>
<evidence type="ECO:0000255" key="3">
    <source>
        <dbReference type="PROSITE-ProRule" id="PRU00272"/>
    </source>
</evidence>
<evidence type="ECO:0000305" key="4"/>
<gene>
    <name type="primary">LCL3</name>
    <name type="ordered locus">PAS_chr1-1_0068</name>
</gene>
<accession>C4QW04</accession>
<keyword id="KW-0106">Calcium</keyword>
<keyword id="KW-0255">Endonuclease</keyword>
<keyword id="KW-0378">Hydrolase</keyword>
<keyword id="KW-0472">Membrane</keyword>
<keyword id="KW-0479">Metal-binding</keyword>
<keyword id="KW-0496">Mitochondrion</keyword>
<keyword id="KW-0540">Nuclease</keyword>
<keyword id="KW-1185">Reference proteome</keyword>
<keyword id="KW-0812">Transmembrane</keyword>
<keyword id="KW-1133">Transmembrane helix</keyword>
<protein>
    <recommendedName>
        <fullName>Probable endonuclease LCL3</fullName>
        <ecNumber>3.1.-.-</ecNumber>
    </recommendedName>
</protein>
<organism>
    <name type="scientific">Komagataella phaffii (strain GS115 / ATCC 20864)</name>
    <name type="common">Yeast</name>
    <name type="synonym">Pichia pastoris</name>
    <dbReference type="NCBI Taxonomy" id="644223"/>
    <lineage>
        <taxon>Eukaryota</taxon>
        <taxon>Fungi</taxon>
        <taxon>Dikarya</taxon>
        <taxon>Ascomycota</taxon>
        <taxon>Saccharomycotina</taxon>
        <taxon>Pichiomycetes</taxon>
        <taxon>Pichiales</taxon>
        <taxon>Pichiaceae</taxon>
        <taxon>Komagataella</taxon>
    </lineage>
</organism>
<comment type="subcellular location">
    <subcellularLocation>
        <location>Mitochondrion</location>
    </subcellularLocation>
    <subcellularLocation>
        <location evidence="1">Membrane</location>
        <topology evidence="1">Single-pass membrane protein</topology>
    </subcellularLocation>
</comment>
<comment type="similarity">
    <text evidence="4">Belongs to the LCL3 family.</text>
</comment>